<sequence>MAISKEKKNEIIAQYARHEGDTGSVEVQVAVLTWEINHLNDHIKQHKKDHATYRGLMKKIGHRRNLLAYLRRTDVNRYRELIQSLGLRR</sequence>
<evidence type="ECO:0000255" key="1">
    <source>
        <dbReference type="HAMAP-Rule" id="MF_01343"/>
    </source>
</evidence>
<evidence type="ECO:0000305" key="2"/>
<gene>
    <name evidence="1" type="primary">rpsO</name>
    <name type="ordered locus">SAG0202</name>
</gene>
<name>RS15_STRA5</name>
<reference key="1">
    <citation type="journal article" date="2002" name="Proc. Natl. Acad. Sci. U.S.A.">
        <title>Complete genome sequence and comparative genomic analysis of an emerging human pathogen, serotype V Streptococcus agalactiae.</title>
        <authorList>
            <person name="Tettelin H."/>
            <person name="Masignani V."/>
            <person name="Cieslewicz M.J."/>
            <person name="Eisen J.A."/>
            <person name="Peterson S.N."/>
            <person name="Wessels M.R."/>
            <person name="Paulsen I.T."/>
            <person name="Nelson K.E."/>
            <person name="Margarit I."/>
            <person name="Read T.D."/>
            <person name="Madoff L.C."/>
            <person name="Wolf A.M."/>
            <person name="Beanan M.J."/>
            <person name="Brinkac L.M."/>
            <person name="Daugherty S.C."/>
            <person name="DeBoy R.T."/>
            <person name="Durkin A.S."/>
            <person name="Kolonay J.F."/>
            <person name="Madupu R."/>
            <person name="Lewis M.R."/>
            <person name="Radune D."/>
            <person name="Fedorova N.B."/>
            <person name="Scanlan D."/>
            <person name="Khouri H.M."/>
            <person name="Mulligan S."/>
            <person name="Carty H.A."/>
            <person name="Cline R.T."/>
            <person name="Van Aken S.E."/>
            <person name="Gill J."/>
            <person name="Scarselli M."/>
            <person name="Mora M."/>
            <person name="Iacobini E.T."/>
            <person name="Brettoni C."/>
            <person name="Galli G."/>
            <person name="Mariani M."/>
            <person name="Vegni F."/>
            <person name="Maione D."/>
            <person name="Rinaudo D."/>
            <person name="Rappuoli R."/>
            <person name="Telford J.L."/>
            <person name="Kasper D.L."/>
            <person name="Grandi G."/>
            <person name="Fraser C.M."/>
        </authorList>
    </citation>
    <scope>NUCLEOTIDE SEQUENCE [LARGE SCALE GENOMIC DNA]</scope>
    <source>
        <strain>ATCC BAA-611 / 2603 V/R</strain>
    </source>
</reference>
<dbReference type="EMBL" id="AE009948">
    <property type="protein sequence ID" value="AAM99109.1"/>
    <property type="molecule type" value="Genomic_DNA"/>
</dbReference>
<dbReference type="RefSeq" id="NP_687237.1">
    <property type="nucleotide sequence ID" value="NC_004116.1"/>
</dbReference>
<dbReference type="RefSeq" id="WP_001018249.1">
    <property type="nucleotide sequence ID" value="NC_004116.1"/>
</dbReference>
<dbReference type="SMR" id="Q8E1Z9"/>
<dbReference type="STRING" id="208435.SAG0202"/>
<dbReference type="GeneID" id="66885178"/>
<dbReference type="KEGG" id="sag:SAG0202"/>
<dbReference type="PATRIC" id="fig|208435.3.peg.202"/>
<dbReference type="HOGENOM" id="CLU_148518_0_0_9"/>
<dbReference type="OrthoDB" id="9799262at2"/>
<dbReference type="Proteomes" id="UP000000821">
    <property type="component" value="Chromosome"/>
</dbReference>
<dbReference type="GO" id="GO:0022627">
    <property type="term" value="C:cytosolic small ribosomal subunit"/>
    <property type="evidence" value="ECO:0007669"/>
    <property type="project" value="TreeGrafter"/>
</dbReference>
<dbReference type="GO" id="GO:0019843">
    <property type="term" value="F:rRNA binding"/>
    <property type="evidence" value="ECO:0007669"/>
    <property type="project" value="UniProtKB-UniRule"/>
</dbReference>
<dbReference type="GO" id="GO:0003735">
    <property type="term" value="F:structural constituent of ribosome"/>
    <property type="evidence" value="ECO:0007669"/>
    <property type="project" value="InterPro"/>
</dbReference>
<dbReference type="GO" id="GO:0006412">
    <property type="term" value="P:translation"/>
    <property type="evidence" value="ECO:0007669"/>
    <property type="project" value="UniProtKB-UniRule"/>
</dbReference>
<dbReference type="CDD" id="cd00353">
    <property type="entry name" value="Ribosomal_S15p_S13e"/>
    <property type="match status" value="1"/>
</dbReference>
<dbReference type="FunFam" id="1.10.287.10:FF:000002">
    <property type="entry name" value="30S ribosomal protein S15"/>
    <property type="match status" value="1"/>
</dbReference>
<dbReference type="Gene3D" id="6.10.250.3130">
    <property type="match status" value="1"/>
</dbReference>
<dbReference type="Gene3D" id="1.10.287.10">
    <property type="entry name" value="S15/NS1, RNA-binding"/>
    <property type="match status" value="1"/>
</dbReference>
<dbReference type="HAMAP" id="MF_01343_B">
    <property type="entry name" value="Ribosomal_uS15_B"/>
    <property type="match status" value="1"/>
</dbReference>
<dbReference type="InterPro" id="IPR000589">
    <property type="entry name" value="Ribosomal_uS15"/>
</dbReference>
<dbReference type="InterPro" id="IPR005290">
    <property type="entry name" value="Ribosomal_uS15_bac-type"/>
</dbReference>
<dbReference type="InterPro" id="IPR009068">
    <property type="entry name" value="uS15_NS1_RNA-bd_sf"/>
</dbReference>
<dbReference type="NCBIfam" id="TIGR00952">
    <property type="entry name" value="S15_bact"/>
    <property type="match status" value="1"/>
</dbReference>
<dbReference type="PANTHER" id="PTHR23321">
    <property type="entry name" value="RIBOSOMAL PROTEIN S15, BACTERIAL AND ORGANELLAR"/>
    <property type="match status" value="1"/>
</dbReference>
<dbReference type="PANTHER" id="PTHR23321:SF26">
    <property type="entry name" value="SMALL RIBOSOMAL SUBUNIT PROTEIN US15M"/>
    <property type="match status" value="1"/>
</dbReference>
<dbReference type="Pfam" id="PF00312">
    <property type="entry name" value="Ribosomal_S15"/>
    <property type="match status" value="1"/>
</dbReference>
<dbReference type="SMART" id="SM01387">
    <property type="entry name" value="Ribosomal_S15"/>
    <property type="match status" value="1"/>
</dbReference>
<dbReference type="SUPFAM" id="SSF47060">
    <property type="entry name" value="S15/NS1 RNA-binding domain"/>
    <property type="match status" value="1"/>
</dbReference>
<dbReference type="PROSITE" id="PS00362">
    <property type="entry name" value="RIBOSOMAL_S15"/>
    <property type="match status" value="1"/>
</dbReference>
<feature type="chain" id="PRO_0000115551" description="Small ribosomal subunit protein uS15">
    <location>
        <begin position="1"/>
        <end position="89"/>
    </location>
</feature>
<comment type="function">
    <text evidence="1">One of the primary rRNA binding proteins, it binds directly to 16S rRNA where it helps nucleate assembly of the platform of the 30S subunit by binding and bridging several RNA helices of the 16S rRNA.</text>
</comment>
<comment type="function">
    <text evidence="1">Forms an intersubunit bridge (bridge B4) with the 23S rRNA of the 50S subunit in the ribosome.</text>
</comment>
<comment type="subunit">
    <text evidence="1">Part of the 30S ribosomal subunit. Forms a bridge to the 50S subunit in the 70S ribosome, contacting the 23S rRNA.</text>
</comment>
<comment type="similarity">
    <text evidence="1">Belongs to the universal ribosomal protein uS15 family.</text>
</comment>
<accession>Q8E1Z9</accession>
<protein>
    <recommendedName>
        <fullName evidence="1">Small ribosomal subunit protein uS15</fullName>
    </recommendedName>
    <alternativeName>
        <fullName evidence="2">30S ribosomal protein S15</fullName>
    </alternativeName>
</protein>
<proteinExistence type="inferred from homology"/>
<organism>
    <name type="scientific">Streptococcus agalactiae serotype V (strain ATCC BAA-611 / 2603 V/R)</name>
    <dbReference type="NCBI Taxonomy" id="208435"/>
    <lineage>
        <taxon>Bacteria</taxon>
        <taxon>Bacillati</taxon>
        <taxon>Bacillota</taxon>
        <taxon>Bacilli</taxon>
        <taxon>Lactobacillales</taxon>
        <taxon>Streptococcaceae</taxon>
        <taxon>Streptococcus</taxon>
    </lineage>
</organism>
<keyword id="KW-1185">Reference proteome</keyword>
<keyword id="KW-0687">Ribonucleoprotein</keyword>
<keyword id="KW-0689">Ribosomal protein</keyword>
<keyword id="KW-0694">RNA-binding</keyword>
<keyword id="KW-0699">rRNA-binding</keyword>